<geneLocation type="mitochondrion"/>
<accession>Q6WRG3</accession>
<organism>
    <name type="scientific">Akodon iniscatus</name>
    <name type="common">Intelligent grass mouse</name>
    <dbReference type="NCBI Taxonomy" id="240588"/>
    <lineage>
        <taxon>Eukaryota</taxon>
        <taxon>Metazoa</taxon>
        <taxon>Chordata</taxon>
        <taxon>Craniata</taxon>
        <taxon>Vertebrata</taxon>
        <taxon>Euteleostomi</taxon>
        <taxon>Mammalia</taxon>
        <taxon>Eutheria</taxon>
        <taxon>Euarchontoglires</taxon>
        <taxon>Glires</taxon>
        <taxon>Rodentia</taxon>
        <taxon>Myomorpha</taxon>
        <taxon>Muroidea</taxon>
        <taxon>Cricetidae</taxon>
        <taxon>Sigmodontinae</taxon>
        <taxon>Akodon</taxon>
    </lineage>
</organism>
<gene>
    <name type="primary">MT-CYB</name>
    <name type="synonym">COB</name>
    <name type="synonym">CYTB</name>
    <name type="synonym">MTCYB</name>
</gene>
<protein>
    <recommendedName>
        <fullName>Cytochrome b</fullName>
    </recommendedName>
    <alternativeName>
        <fullName>Complex III subunit 3</fullName>
    </alternativeName>
    <alternativeName>
        <fullName>Complex III subunit III</fullName>
    </alternativeName>
    <alternativeName>
        <fullName>Cytochrome b-c1 complex subunit 3</fullName>
    </alternativeName>
    <alternativeName>
        <fullName>Ubiquinol-cytochrome-c reductase complex cytochrome b subunit</fullName>
    </alternativeName>
</protein>
<keyword id="KW-0249">Electron transport</keyword>
<keyword id="KW-0349">Heme</keyword>
<keyword id="KW-0408">Iron</keyword>
<keyword id="KW-0472">Membrane</keyword>
<keyword id="KW-0479">Metal-binding</keyword>
<keyword id="KW-0496">Mitochondrion</keyword>
<keyword id="KW-0999">Mitochondrion inner membrane</keyword>
<keyword id="KW-0679">Respiratory chain</keyword>
<keyword id="KW-0812">Transmembrane</keyword>
<keyword id="KW-1133">Transmembrane helix</keyword>
<keyword id="KW-0813">Transport</keyword>
<keyword id="KW-0830">Ubiquinone</keyword>
<proteinExistence type="inferred from homology"/>
<sequence>MKILRKNHPLLKIINHSFIDLPAPSNISSWWNFGSLLGVCLMIQILTGLFLAMHYTSDTTTAFSSVAHICRDVNYGWLIRYLHANGASMFFICLFIHVGRGIYYGSYVLSETWNIGIILFLTTMATAFVGYVLPWGQMSFWGATVITNLLSAIPYIGNTLVEWIWGGFSVDKATLTRFFAFHFILPFIITAFVLVHLLFLHETGSNNPSGLNSDSDKIPFHPYYTIKDLLGILFLLMALMILALFFPDILGDPDNYTPANPLNTPAHIKPEWYFLFAYAILRSIPNKLGGVLALLLSIIILAAFPLLNTSKQHGLIFRPVTQTIYWIFIANLLVLTWIGGQPVEYPFTMIGQIASVIYFATIIVLMPVSNTIENNIIKL</sequence>
<comment type="function">
    <text evidence="2">Component of the ubiquinol-cytochrome c reductase complex (complex III or cytochrome b-c1 complex) that is part of the mitochondrial respiratory chain. The b-c1 complex mediates electron transfer from ubiquinol to cytochrome c. Contributes to the generation of a proton gradient across the mitochondrial membrane that is then used for ATP synthesis.</text>
</comment>
<comment type="cofactor">
    <cofactor evidence="2">
        <name>heme b</name>
        <dbReference type="ChEBI" id="CHEBI:60344"/>
    </cofactor>
    <text evidence="2">Binds 2 heme b groups non-covalently.</text>
</comment>
<comment type="subunit">
    <text evidence="2">The cytochrome bc1 complex contains 11 subunits: 3 respiratory subunits (MT-CYB, CYC1 and UQCRFS1), 2 core proteins (UQCRC1 and UQCRC2) and 6 low-molecular weight proteins (UQCRH/QCR6, UQCRB/QCR7, UQCRQ/QCR8, UQCR10/QCR9, UQCR11/QCR10 and a cleavage product of UQCRFS1). This cytochrome bc1 complex then forms a dimer.</text>
</comment>
<comment type="subcellular location">
    <subcellularLocation>
        <location evidence="2">Mitochondrion inner membrane</location>
        <topology evidence="2">Multi-pass membrane protein</topology>
    </subcellularLocation>
</comment>
<comment type="miscellaneous">
    <text evidence="1">Heme 1 (or BL or b562) is low-potential and absorbs at about 562 nm, and heme 2 (or BH or b566) is high-potential and absorbs at about 566 nm.</text>
</comment>
<comment type="similarity">
    <text evidence="3 4">Belongs to the cytochrome b family.</text>
</comment>
<comment type="caution">
    <text evidence="2">The full-length protein contains only eight transmembrane helices, not nine as predicted by bioinformatics tools.</text>
</comment>
<dbReference type="EMBL" id="AY273917">
    <property type="protein sequence ID" value="AAQ20034.1"/>
    <property type="molecule type" value="Genomic_DNA"/>
</dbReference>
<dbReference type="SMR" id="Q6WRG3"/>
<dbReference type="GO" id="GO:0005743">
    <property type="term" value="C:mitochondrial inner membrane"/>
    <property type="evidence" value="ECO:0007669"/>
    <property type="project" value="UniProtKB-SubCell"/>
</dbReference>
<dbReference type="GO" id="GO:0045275">
    <property type="term" value="C:respiratory chain complex III"/>
    <property type="evidence" value="ECO:0007669"/>
    <property type="project" value="InterPro"/>
</dbReference>
<dbReference type="GO" id="GO:0046872">
    <property type="term" value="F:metal ion binding"/>
    <property type="evidence" value="ECO:0007669"/>
    <property type="project" value="UniProtKB-KW"/>
</dbReference>
<dbReference type="GO" id="GO:0008121">
    <property type="term" value="F:ubiquinol-cytochrome-c reductase activity"/>
    <property type="evidence" value="ECO:0007669"/>
    <property type="project" value="InterPro"/>
</dbReference>
<dbReference type="GO" id="GO:0006122">
    <property type="term" value="P:mitochondrial electron transport, ubiquinol to cytochrome c"/>
    <property type="evidence" value="ECO:0007669"/>
    <property type="project" value="TreeGrafter"/>
</dbReference>
<dbReference type="CDD" id="cd00290">
    <property type="entry name" value="cytochrome_b_C"/>
    <property type="match status" value="1"/>
</dbReference>
<dbReference type="CDD" id="cd00284">
    <property type="entry name" value="Cytochrome_b_N"/>
    <property type="match status" value="1"/>
</dbReference>
<dbReference type="FunFam" id="1.20.810.10:FF:000002">
    <property type="entry name" value="Cytochrome b"/>
    <property type="match status" value="1"/>
</dbReference>
<dbReference type="Gene3D" id="1.20.810.10">
    <property type="entry name" value="Cytochrome Bc1 Complex, Chain C"/>
    <property type="match status" value="1"/>
</dbReference>
<dbReference type="InterPro" id="IPR005798">
    <property type="entry name" value="Cyt_b/b6_C"/>
</dbReference>
<dbReference type="InterPro" id="IPR036150">
    <property type="entry name" value="Cyt_b/b6_C_sf"/>
</dbReference>
<dbReference type="InterPro" id="IPR005797">
    <property type="entry name" value="Cyt_b/b6_N"/>
</dbReference>
<dbReference type="InterPro" id="IPR027387">
    <property type="entry name" value="Cytb/b6-like_sf"/>
</dbReference>
<dbReference type="InterPro" id="IPR030689">
    <property type="entry name" value="Cytochrome_b"/>
</dbReference>
<dbReference type="InterPro" id="IPR048260">
    <property type="entry name" value="Cytochrome_b_C_euk/bac"/>
</dbReference>
<dbReference type="InterPro" id="IPR048259">
    <property type="entry name" value="Cytochrome_b_N_euk/bac"/>
</dbReference>
<dbReference type="InterPro" id="IPR016174">
    <property type="entry name" value="Di-haem_cyt_TM"/>
</dbReference>
<dbReference type="PANTHER" id="PTHR19271">
    <property type="entry name" value="CYTOCHROME B"/>
    <property type="match status" value="1"/>
</dbReference>
<dbReference type="PANTHER" id="PTHR19271:SF16">
    <property type="entry name" value="CYTOCHROME B"/>
    <property type="match status" value="1"/>
</dbReference>
<dbReference type="Pfam" id="PF00032">
    <property type="entry name" value="Cytochrom_B_C"/>
    <property type="match status" value="1"/>
</dbReference>
<dbReference type="Pfam" id="PF00033">
    <property type="entry name" value="Cytochrome_B"/>
    <property type="match status" value="1"/>
</dbReference>
<dbReference type="PIRSF" id="PIRSF038885">
    <property type="entry name" value="COB"/>
    <property type="match status" value="1"/>
</dbReference>
<dbReference type="SUPFAM" id="SSF81648">
    <property type="entry name" value="a domain/subunit of cytochrome bc1 complex (Ubiquinol-cytochrome c reductase)"/>
    <property type="match status" value="1"/>
</dbReference>
<dbReference type="SUPFAM" id="SSF81342">
    <property type="entry name" value="Transmembrane di-heme cytochromes"/>
    <property type="match status" value="1"/>
</dbReference>
<dbReference type="PROSITE" id="PS51003">
    <property type="entry name" value="CYTB_CTER"/>
    <property type="match status" value="1"/>
</dbReference>
<dbReference type="PROSITE" id="PS51002">
    <property type="entry name" value="CYTB_NTER"/>
    <property type="match status" value="1"/>
</dbReference>
<name>CYB_AKOIN</name>
<feature type="chain" id="PRO_0000254973" description="Cytochrome b">
    <location>
        <begin position="1"/>
        <end position="379"/>
    </location>
</feature>
<feature type="transmembrane region" description="Helical" evidence="2">
    <location>
        <begin position="33"/>
        <end position="53"/>
    </location>
</feature>
<feature type="transmembrane region" description="Helical" evidence="2">
    <location>
        <begin position="77"/>
        <end position="98"/>
    </location>
</feature>
<feature type="transmembrane region" description="Helical" evidence="2">
    <location>
        <begin position="113"/>
        <end position="133"/>
    </location>
</feature>
<feature type="transmembrane region" description="Helical" evidence="2">
    <location>
        <begin position="178"/>
        <end position="198"/>
    </location>
</feature>
<feature type="transmembrane region" description="Helical" evidence="2">
    <location>
        <begin position="226"/>
        <end position="246"/>
    </location>
</feature>
<feature type="transmembrane region" description="Helical" evidence="2">
    <location>
        <begin position="288"/>
        <end position="308"/>
    </location>
</feature>
<feature type="transmembrane region" description="Helical" evidence="2">
    <location>
        <begin position="320"/>
        <end position="340"/>
    </location>
</feature>
<feature type="transmembrane region" description="Helical" evidence="2">
    <location>
        <begin position="347"/>
        <end position="367"/>
    </location>
</feature>
<feature type="binding site" description="axial binding residue" evidence="2">
    <location>
        <position position="83"/>
    </location>
    <ligand>
        <name>heme b</name>
        <dbReference type="ChEBI" id="CHEBI:60344"/>
        <label>b562</label>
    </ligand>
    <ligandPart>
        <name>Fe</name>
        <dbReference type="ChEBI" id="CHEBI:18248"/>
    </ligandPart>
</feature>
<feature type="binding site" description="axial binding residue" evidence="2">
    <location>
        <position position="97"/>
    </location>
    <ligand>
        <name>heme b</name>
        <dbReference type="ChEBI" id="CHEBI:60344"/>
        <label>b566</label>
    </ligand>
    <ligandPart>
        <name>Fe</name>
        <dbReference type="ChEBI" id="CHEBI:18248"/>
    </ligandPart>
</feature>
<feature type="binding site" description="axial binding residue" evidence="2">
    <location>
        <position position="182"/>
    </location>
    <ligand>
        <name>heme b</name>
        <dbReference type="ChEBI" id="CHEBI:60344"/>
        <label>b562</label>
    </ligand>
    <ligandPart>
        <name>Fe</name>
        <dbReference type="ChEBI" id="CHEBI:18248"/>
    </ligandPart>
</feature>
<feature type="binding site" description="axial binding residue" evidence="2">
    <location>
        <position position="196"/>
    </location>
    <ligand>
        <name>heme b</name>
        <dbReference type="ChEBI" id="CHEBI:60344"/>
        <label>b566</label>
    </ligand>
    <ligandPart>
        <name>Fe</name>
        <dbReference type="ChEBI" id="CHEBI:18248"/>
    </ligandPart>
</feature>
<feature type="binding site" evidence="2">
    <location>
        <position position="201"/>
    </location>
    <ligand>
        <name>a ubiquinone</name>
        <dbReference type="ChEBI" id="CHEBI:16389"/>
    </ligand>
</feature>
<reference key="1">
    <citation type="journal article" date="2003" name="Cladistics">
        <title>Phylogenetics of Sigmodontinae (Rodentia, Muroidea, Cricetidae), with special reference to the akodont group, and with additional comments on historical biogeography.</title>
        <authorList>
            <person name="D'Elia G."/>
        </authorList>
    </citation>
    <scope>NUCLEOTIDE SEQUENCE [GENOMIC DNA]</scope>
</reference>
<evidence type="ECO:0000250" key="1"/>
<evidence type="ECO:0000250" key="2">
    <source>
        <dbReference type="UniProtKB" id="P00157"/>
    </source>
</evidence>
<evidence type="ECO:0000255" key="3">
    <source>
        <dbReference type="PROSITE-ProRule" id="PRU00967"/>
    </source>
</evidence>
<evidence type="ECO:0000255" key="4">
    <source>
        <dbReference type="PROSITE-ProRule" id="PRU00968"/>
    </source>
</evidence>